<dbReference type="EMBL" id="AF080119">
    <property type="protein sequence ID" value="AAC35525.1"/>
    <property type="molecule type" value="Genomic_DNA"/>
</dbReference>
<dbReference type="EMBL" id="AL161518">
    <property type="protein sequence ID" value="CAB81175.1"/>
    <property type="molecule type" value="Genomic_DNA"/>
</dbReference>
<dbReference type="EMBL" id="CP002687">
    <property type="protein sequence ID" value="AEE82923.1"/>
    <property type="molecule type" value="Genomic_DNA"/>
</dbReference>
<dbReference type="PIR" id="T01903">
    <property type="entry name" value="T01903"/>
</dbReference>
<dbReference type="RefSeq" id="NP_192812.1">
    <property type="nucleotide sequence ID" value="NM_117142.1"/>
</dbReference>
<dbReference type="FunCoup" id="O82488">
    <property type="interactions" value="1"/>
</dbReference>
<dbReference type="STRING" id="3702.O82488"/>
<dbReference type="PaxDb" id="3702-AT4G10740.1"/>
<dbReference type="EnsemblPlants" id="AT4G10740.1">
    <property type="protein sequence ID" value="AT4G10740.1"/>
    <property type="gene ID" value="AT4G10740"/>
</dbReference>
<dbReference type="GeneID" id="826668"/>
<dbReference type="Gramene" id="AT4G10740.1">
    <property type="protein sequence ID" value="AT4G10740.1"/>
    <property type="gene ID" value="AT4G10740"/>
</dbReference>
<dbReference type="KEGG" id="ath:AT4G10740"/>
<dbReference type="Araport" id="AT4G10740"/>
<dbReference type="TAIR" id="AT4G10740"/>
<dbReference type="HOGENOM" id="CLU_034692_0_0_1"/>
<dbReference type="InParanoid" id="O82488"/>
<dbReference type="OMA" id="PHWRIIS"/>
<dbReference type="PhylomeDB" id="O82488"/>
<dbReference type="BioCyc" id="ARA:AT4G10740-MONOMER"/>
<dbReference type="PRO" id="PR:O82488"/>
<dbReference type="Proteomes" id="UP000006548">
    <property type="component" value="Chromosome 4"/>
</dbReference>
<dbReference type="ExpressionAtlas" id="O82488">
    <property type="expression patterns" value="baseline and differential"/>
</dbReference>
<dbReference type="CDD" id="cd22157">
    <property type="entry name" value="F-box_AtFBW1-like"/>
    <property type="match status" value="1"/>
</dbReference>
<dbReference type="Gene3D" id="1.20.1280.50">
    <property type="match status" value="1"/>
</dbReference>
<dbReference type="InterPro" id="IPR006527">
    <property type="entry name" value="F-box-assoc_dom_typ1"/>
</dbReference>
<dbReference type="InterPro" id="IPR017451">
    <property type="entry name" value="F-box-assoc_interact_dom"/>
</dbReference>
<dbReference type="InterPro" id="IPR036047">
    <property type="entry name" value="F-box-like_dom_sf"/>
</dbReference>
<dbReference type="InterPro" id="IPR001810">
    <property type="entry name" value="F-box_dom"/>
</dbReference>
<dbReference type="InterPro" id="IPR050796">
    <property type="entry name" value="SCF_F-box_component"/>
</dbReference>
<dbReference type="NCBIfam" id="TIGR01640">
    <property type="entry name" value="F_box_assoc_1"/>
    <property type="match status" value="1"/>
</dbReference>
<dbReference type="PANTHER" id="PTHR31672">
    <property type="entry name" value="BNACNNG10540D PROTEIN"/>
    <property type="match status" value="1"/>
</dbReference>
<dbReference type="PANTHER" id="PTHR31672:SF13">
    <property type="entry name" value="F-BOX PROTEIN CPR30-LIKE"/>
    <property type="match status" value="1"/>
</dbReference>
<dbReference type="Pfam" id="PF00646">
    <property type="entry name" value="F-box"/>
    <property type="match status" value="1"/>
</dbReference>
<dbReference type="Pfam" id="PF07734">
    <property type="entry name" value="FBA_1"/>
    <property type="match status" value="1"/>
</dbReference>
<dbReference type="SMART" id="SM00256">
    <property type="entry name" value="FBOX"/>
    <property type="match status" value="1"/>
</dbReference>
<dbReference type="SUPFAM" id="SSF81383">
    <property type="entry name" value="F-box domain"/>
    <property type="match status" value="1"/>
</dbReference>
<dbReference type="PROSITE" id="PS50181">
    <property type="entry name" value="FBOX"/>
    <property type="match status" value="1"/>
</dbReference>
<proteinExistence type="predicted"/>
<sequence>MRTTMSNLPKELVEDIVSRVPLHCLRAMRLTCKNWNALLESQSFKKMHIRKEEEAARELGENRMIVMMDYNVYLMGIIVNENLSIKSLGKLTCLHGSKQVKISQVFHCEGLLLCILKDDDTKIVVLNPYLGQTRWIQTRKYHRTSEWEGRDVYNYALRYETNSGNRSPKILRFIDDFHHHPENPALRYETYDFDTDLWTTLDVSPHWRIISRCGGVSLNGNTYWGAVERNASAYIGHMICFDFTRGGFGPLIPLPFKARGLVFAPLSSDRAEKIAALFRTSKKVVIWITTKIDATNVTWSNFFTIYISNLERNLSCKSFFTIYISNLERNLSCKSFFIDMEKKVAMVFDKEKGKKVAHNIINIIGEAGCVRKLVLKESGDKSCWPLVCSYVPSTVQIKQHNRGKRQKKVIRKGIDIDMRHDKRIKVD</sequence>
<name>FB229_ARATH</name>
<gene>
    <name type="ordered locus">At4g10740</name>
    <name type="ORF">T12H20.5</name>
</gene>
<feature type="chain" id="PRO_0000283498" description="Putative F-box protein At4g10740">
    <location>
        <begin position="1"/>
        <end position="427"/>
    </location>
</feature>
<feature type="domain" description="F-box" evidence="1">
    <location>
        <begin position="2"/>
        <end position="47"/>
    </location>
</feature>
<organism>
    <name type="scientific">Arabidopsis thaliana</name>
    <name type="common">Mouse-ear cress</name>
    <dbReference type="NCBI Taxonomy" id="3702"/>
    <lineage>
        <taxon>Eukaryota</taxon>
        <taxon>Viridiplantae</taxon>
        <taxon>Streptophyta</taxon>
        <taxon>Embryophyta</taxon>
        <taxon>Tracheophyta</taxon>
        <taxon>Spermatophyta</taxon>
        <taxon>Magnoliopsida</taxon>
        <taxon>eudicotyledons</taxon>
        <taxon>Gunneridae</taxon>
        <taxon>Pentapetalae</taxon>
        <taxon>rosids</taxon>
        <taxon>malvids</taxon>
        <taxon>Brassicales</taxon>
        <taxon>Brassicaceae</taxon>
        <taxon>Camelineae</taxon>
        <taxon>Arabidopsis</taxon>
    </lineage>
</organism>
<reference key="1">
    <citation type="journal article" date="1999" name="Nature">
        <title>Sequence and analysis of chromosome 4 of the plant Arabidopsis thaliana.</title>
        <authorList>
            <person name="Mayer K.F.X."/>
            <person name="Schueller C."/>
            <person name="Wambutt R."/>
            <person name="Murphy G."/>
            <person name="Volckaert G."/>
            <person name="Pohl T."/>
            <person name="Duesterhoeft A."/>
            <person name="Stiekema W."/>
            <person name="Entian K.-D."/>
            <person name="Terryn N."/>
            <person name="Harris B."/>
            <person name="Ansorge W."/>
            <person name="Brandt P."/>
            <person name="Grivell L.A."/>
            <person name="Rieger M."/>
            <person name="Weichselgartner M."/>
            <person name="de Simone V."/>
            <person name="Obermaier B."/>
            <person name="Mache R."/>
            <person name="Mueller M."/>
            <person name="Kreis M."/>
            <person name="Delseny M."/>
            <person name="Puigdomenech P."/>
            <person name="Watson M."/>
            <person name="Schmidtheini T."/>
            <person name="Reichert B."/>
            <person name="Portetelle D."/>
            <person name="Perez-Alonso M."/>
            <person name="Boutry M."/>
            <person name="Bancroft I."/>
            <person name="Vos P."/>
            <person name="Hoheisel J."/>
            <person name="Zimmermann W."/>
            <person name="Wedler H."/>
            <person name="Ridley P."/>
            <person name="Langham S.-A."/>
            <person name="McCullagh B."/>
            <person name="Bilham L."/>
            <person name="Robben J."/>
            <person name="van der Schueren J."/>
            <person name="Grymonprez B."/>
            <person name="Chuang Y.-J."/>
            <person name="Vandenbussche F."/>
            <person name="Braeken M."/>
            <person name="Weltjens I."/>
            <person name="Voet M."/>
            <person name="Bastiaens I."/>
            <person name="Aert R."/>
            <person name="Defoor E."/>
            <person name="Weitzenegger T."/>
            <person name="Bothe G."/>
            <person name="Ramsperger U."/>
            <person name="Hilbert H."/>
            <person name="Braun M."/>
            <person name="Holzer E."/>
            <person name="Brandt A."/>
            <person name="Peters S."/>
            <person name="van Staveren M."/>
            <person name="Dirkse W."/>
            <person name="Mooijman P."/>
            <person name="Klein Lankhorst R."/>
            <person name="Rose M."/>
            <person name="Hauf J."/>
            <person name="Koetter P."/>
            <person name="Berneiser S."/>
            <person name="Hempel S."/>
            <person name="Feldpausch M."/>
            <person name="Lamberth S."/>
            <person name="Van den Daele H."/>
            <person name="De Keyser A."/>
            <person name="Buysshaert C."/>
            <person name="Gielen J."/>
            <person name="Villarroel R."/>
            <person name="De Clercq R."/>
            <person name="van Montagu M."/>
            <person name="Rogers J."/>
            <person name="Cronin A."/>
            <person name="Quail M.A."/>
            <person name="Bray-Allen S."/>
            <person name="Clark L."/>
            <person name="Doggett J."/>
            <person name="Hall S."/>
            <person name="Kay M."/>
            <person name="Lennard N."/>
            <person name="McLay K."/>
            <person name="Mayes R."/>
            <person name="Pettett A."/>
            <person name="Rajandream M.A."/>
            <person name="Lyne M."/>
            <person name="Benes V."/>
            <person name="Rechmann S."/>
            <person name="Borkova D."/>
            <person name="Bloecker H."/>
            <person name="Scharfe M."/>
            <person name="Grimm M."/>
            <person name="Loehnert T.-H."/>
            <person name="Dose S."/>
            <person name="de Haan M."/>
            <person name="Maarse A.C."/>
            <person name="Schaefer M."/>
            <person name="Mueller-Auer S."/>
            <person name="Gabel C."/>
            <person name="Fuchs M."/>
            <person name="Fartmann B."/>
            <person name="Granderath K."/>
            <person name="Dauner D."/>
            <person name="Herzl A."/>
            <person name="Neumann S."/>
            <person name="Argiriou A."/>
            <person name="Vitale D."/>
            <person name="Liguori R."/>
            <person name="Piravandi E."/>
            <person name="Massenet O."/>
            <person name="Quigley F."/>
            <person name="Clabauld G."/>
            <person name="Muendlein A."/>
            <person name="Felber R."/>
            <person name="Schnabl S."/>
            <person name="Hiller R."/>
            <person name="Schmidt W."/>
            <person name="Lecharny A."/>
            <person name="Aubourg S."/>
            <person name="Chefdor F."/>
            <person name="Cooke R."/>
            <person name="Berger C."/>
            <person name="Monfort A."/>
            <person name="Casacuberta E."/>
            <person name="Gibbons T."/>
            <person name="Weber N."/>
            <person name="Vandenbol M."/>
            <person name="Bargues M."/>
            <person name="Terol J."/>
            <person name="Torres A."/>
            <person name="Perez-Perez A."/>
            <person name="Purnelle B."/>
            <person name="Bent E."/>
            <person name="Johnson S."/>
            <person name="Tacon D."/>
            <person name="Jesse T."/>
            <person name="Heijnen L."/>
            <person name="Schwarz S."/>
            <person name="Scholler P."/>
            <person name="Heber S."/>
            <person name="Francs P."/>
            <person name="Bielke C."/>
            <person name="Frishman D."/>
            <person name="Haase D."/>
            <person name="Lemcke K."/>
            <person name="Mewes H.-W."/>
            <person name="Stocker S."/>
            <person name="Zaccaria P."/>
            <person name="Bevan M."/>
            <person name="Wilson R.K."/>
            <person name="de la Bastide M."/>
            <person name="Habermann K."/>
            <person name="Parnell L."/>
            <person name="Dedhia N."/>
            <person name="Gnoj L."/>
            <person name="Schutz K."/>
            <person name="Huang E."/>
            <person name="Spiegel L."/>
            <person name="Sekhon M."/>
            <person name="Murray J."/>
            <person name="Sheet P."/>
            <person name="Cordes M."/>
            <person name="Abu-Threideh J."/>
            <person name="Stoneking T."/>
            <person name="Kalicki J."/>
            <person name="Graves T."/>
            <person name="Harmon G."/>
            <person name="Edwards J."/>
            <person name="Latreille P."/>
            <person name="Courtney L."/>
            <person name="Cloud J."/>
            <person name="Abbott A."/>
            <person name="Scott K."/>
            <person name="Johnson D."/>
            <person name="Minx P."/>
            <person name="Bentley D."/>
            <person name="Fulton B."/>
            <person name="Miller N."/>
            <person name="Greco T."/>
            <person name="Kemp K."/>
            <person name="Kramer J."/>
            <person name="Fulton L."/>
            <person name="Mardis E."/>
            <person name="Dante M."/>
            <person name="Pepin K."/>
            <person name="Hillier L.W."/>
            <person name="Nelson J."/>
            <person name="Spieth J."/>
            <person name="Ryan E."/>
            <person name="Andrews S."/>
            <person name="Geisel C."/>
            <person name="Layman D."/>
            <person name="Du H."/>
            <person name="Ali J."/>
            <person name="Berghoff A."/>
            <person name="Jones K."/>
            <person name="Drone K."/>
            <person name="Cotton M."/>
            <person name="Joshu C."/>
            <person name="Antonoiu B."/>
            <person name="Zidanic M."/>
            <person name="Strong C."/>
            <person name="Sun H."/>
            <person name="Lamar B."/>
            <person name="Yordan C."/>
            <person name="Ma P."/>
            <person name="Zhong J."/>
            <person name="Preston R."/>
            <person name="Vil D."/>
            <person name="Shekher M."/>
            <person name="Matero A."/>
            <person name="Shah R."/>
            <person name="Swaby I.K."/>
            <person name="O'Shaughnessy A."/>
            <person name="Rodriguez M."/>
            <person name="Hoffman J."/>
            <person name="Till S."/>
            <person name="Granat S."/>
            <person name="Shohdy N."/>
            <person name="Hasegawa A."/>
            <person name="Hameed A."/>
            <person name="Lodhi M."/>
            <person name="Johnson A."/>
            <person name="Chen E."/>
            <person name="Marra M.A."/>
            <person name="Martienssen R."/>
            <person name="McCombie W.R."/>
        </authorList>
    </citation>
    <scope>NUCLEOTIDE SEQUENCE [LARGE SCALE GENOMIC DNA]</scope>
    <source>
        <strain>cv. Columbia</strain>
    </source>
</reference>
<reference key="2">
    <citation type="journal article" date="2017" name="Plant J.">
        <title>Araport11: a complete reannotation of the Arabidopsis thaliana reference genome.</title>
        <authorList>
            <person name="Cheng C.Y."/>
            <person name="Krishnakumar V."/>
            <person name="Chan A.P."/>
            <person name="Thibaud-Nissen F."/>
            <person name="Schobel S."/>
            <person name="Town C.D."/>
        </authorList>
    </citation>
    <scope>GENOME REANNOTATION</scope>
    <source>
        <strain>cv. Columbia</strain>
    </source>
</reference>
<accession>O82488</accession>
<protein>
    <recommendedName>
        <fullName>Putative F-box protein At4g10740</fullName>
    </recommendedName>
</protein>
<keyword id="KW-1185">Reference proteome</keyword>
<evidence type="ECO:0000255" key="1">
    <source>
        <dbReference type="PROSITE-ProRule" id="PRU00080"/>
    </source>
</evidence>